<feature type="chain" id="PRO_0000123710" description="Isoprenyl transferase 2">
    <location>
        <begin position="1"/>
        <end position="258"/>
    </location>
</feature>
<feature type="active site" evidence="1">
    <location>
        <position position="39"/>
    </location>
</feature>
<feature type="active site" description="Proton acceptor" evidence="1">
    <location>
        <position position="88"/>
    </location>
</feature>
<feature type="binding site" evidence="1">
    <location>
        <position position="39"/>
    </location>
    <ligand>
        <name>Mg(2+)</name>
        <dbReference type="ChEBI" id="CHEBI:18420"/>
    </ligand>
</feature>
<feature type="binding site" evidence="1">
    <location>
        <begin position="40"/>
        <end position="43"/>
    </location>
    <ligand>
        <name>substrate</name>
    </ligand>
</feature>
<feature type="binding site" evidence="1">
    <location>
        <position position="44"/>
    </location>
    <ligand>
        <name>substrate</name>
    </ligand>
</feature>
<feature type="binding site" evidence="1">
    <location>
        <position position="52"/>
    </location>
    <ligand>
        <name>substrate</name>
    </ligand>
</feature>
<feature type="binding site" evidence="1">
    <location>
        <position position="57"/>
    </location>
    <ligand>
        <name>substrate</name>
    </ligand>
</feature>
<feature type="binding site" evidence="1">
    <location>
        <begin position="85"/>
        <end position="87"/>
    </location>
    <ligand>
        <name>substrate</name>
    </ligand>
</feature>
<feature type="binding site" evidence="1">
    <location>
        <position position="92"/>
    </location>
    <ligand>
        <name>substrate</name>
    </ligand>
</feature>
<feature type="binding site" evidence="1">
    <location>
        <position position="207"/>
    </location>
    <ligand>
        <name>substrate</name>
    </ligand>
</feature>
<feature type="binding site" evidence="1">
    <location>
        <begin position="213"/>
        <end position="215"/>
    </location>
    <ligand>
        <name>substrate</name>
    </ligand>
</feature>
<feature type="binding site" evidence="1">
    <location>
        <position position="226"/>
    </location>
    <ligand>
        <name>Mg(2+)</name>
        <dbReference type="ChEBI" id="CHEBI:18420"/>
    </ligand>
</feature>
<organism>
    <name type="scientific">Tropheryma whipplei (strain Twist)</name>
    <name type="common">Whipple's bacillus</name>
    <dbReference type="NCBI Taxonomy" id="203267"/>
    <lineage>
        <taxon>Bacteria</taxon>
        <taxon>Bacillati</taxon>
        <taxon>Actinomycetota</taxon>
        <taxon>Actinomycetes</taxon>
        <taxon>Micrococcales</taxon>
        <taxon>Tropherymataceae</taxon>
        <taxon>Tropheryma</taxon>
    </lineage>
</organism>
<comment type="function">
    <text evidence="1">Catalyzes the condensation of isopentenyl diphosphate (IPP) with allylic pyrophosphates generating different type of terpenoids.</text>
</comment>
<comment type="cofactor">
    <cofactor evidence="1">
        <name>Mg(2+)</name>
        <dbReference type="ChEBI" id="CHEBI:18420"/>
    </cofactor>
    <text evidence="1">Binds 2 magnesium ions per subunit.</text>
</comment>
<comment type="subunit">
    <text evidence="1">Homodimer.</text>
</comment>
<comment type="similarity">
    <text evidence="1">Belongs to the UPP synthase family.</text>
</comment>
<protein>
    <recommendedName>
        <fullName evidence="1">Isoprenyl transferase 2</fullName>
        <ecNumber evidence="1">2.5.1.-</ecNumber>
    </recommendedName>
</protein>
<evidence type="ECO:0000255" key="1">
    <source>
        <dbReference type="HAMAP-Rule" id="MF_01139"/>
    </source>
</evidence>
<reference key="1">
    <citation type="journal article" date="2003" name="Genome Res.">
        <title>Tropheryma whipplei twist: a human pathogenic Actinobacteria with a reduced genome.</title>
        <authorList>
            <person name="Raoult D."/>
            <person name="Ogata H."/>
            <person name="Audic S."/>
            <person name="Robert C."/>
            <person name="Suhre K."/>
            <person name="Drancourt M."/>
            <person name="Claverie J.-M."/>
        </authorList>
    </citation>
    <scope>NUCLEOTIDE SEQUENCE [LARGE SCALE GENOMIC DNA]</scope>
    <source>
        <strain>Twist</strain>
    </source>
</reference>
<keyword id="KW-0460">Magnesium</keyword>
<keyword id="KW-0479">Metal-binding</keyword>
<keyword id="KW-1185">Reference proteome</keyword>
<keyword id="KW-0808">Transferase</keyword>
<dbReference type="EC" id="2.5.1.-" evidence="1"/>
<dbReference type="EMBL" id="AE014184">
    <property type="protein sequence ID" value="AAO44428.1"/>
    <property type="molecule type" value="Genomic_DNA"/>
</dbReference>
<dbReference type="SMR" id="Q83GG2"/>
<dbReference type="STRING" id="203267.TWT_331"/>
<dbReference type="KEGG" id="twh:TWT_331"/>
<dbReference type="eggNOG" id="COG0020">
    <property type="taxonomic scope" value="Bacteria"/>
</dbReference>
<dbReference type="HOGENOM" id="CLU_038505_2_0_11"/>
<dbReference type="OrthoDB" id="4191603at2"/>
<dbReference type="Proteomes" id="UP000002200">
    <property type="component" value="Chromosome"/>
</dbReference>
<dbReference type="GO" id="GO:0045547">
    <property type="term" value="F:ditrans,polycis-polyprenyl diphosphate synthase [(2E,6E)-farnesyl diphosphate specific] activity"/>
    <property type="evidence" value="ECO:0007669"/>
    <property type="project" value="TreeGrafter"/>
</dbReference>
<dbReference type="GO" id="GO:0000287">
    <property type="term" value="F:magnesium ion binding"/>
    <property type="evidence" value="ECO:0007669"/>
    <property type="project" value="UniProtKB-UniRule"/>
</dbReference>
<dbReference type="GO" id="GO:0016094">
    <property type="term" value="P:polyprenol biosynthetic process"/>
    <property type="evidence" value="ECO:0007669"/>
    <property type="project" value="TreeGrafter"/>
</dbReference>
<dbReference type="CDD" id="cd00475">
    <property type="entry name" value="Cis_IPPS"/>
    <property type="match status" value="1"/>
</dbReference>
<dbReference type="Gene3D" id="3.40.1180.10">
    <property type="entry name" value="Decaprenyl diphosphate synthase-like"/>
    <property type="match status" value="1"/>
</dbReference>
<dbReference type="HAMAP" id="MF_01139">
    <property type="entry name" value="ISPT"/>
    <property type="match status" value="1"/>
</dbReference>
<dbReference type="InterPro" id="IPR001441">
    <property type="entry name" value="UPP_synth-like"/>
</dbReference>
<dbReference type="InterPro" id="IPR018520">
    <property type="entry name" value="UPP_synth-like_CS"/>
</dbReference>
<dbReference type="InterPro" id="IPR036424">
    <property type="entry name" value="UPP_synth-like_sf"/>
</dbReference>
<dbReference type="NCBIfam" id="NF011403">
    <property type="entry name" value="PRK14828.1"/>
    <property type="match status" value="1"/>
</dbReference>
<dbReference type="NCBIfam" id="TIGR00055">
    <property type="entry name" value="uppS"/>
    <property type="match status" value="1"/>
</dbReference>
<dbReference type="PANTHER" id="PTHR10291:SF43">
    <property type="entry name" value="DEHYDRODOLICHYL DIPHOSPHATE SYNTHASE COMPLEX SUBUNIT DHDDS"/>
    <property type="match status" value="1"/>
</dbReference>
<dbReference type="PANTHER" id="PTHR10291">
    <property type="entry name" value="DEHYDRODOLICHYL DIPHOSPHATE SYNTHASE FAMILY MEMBER"/>
    <property type="match status" value="1"/>
</dbReference>
<dbReference type="Pfam" id="PF01255">
    <property type="entry name" value="Prenyltransf"/>
    <property type="match status" value="1"/>
</dbReference>
<dbReference type="SUPFAM" id="SSF64005">
    <property type="entry name" value="Undecaprenyl diphosphate synthase"/>
    <property type="match status" value="1"/>
</dbReference>
<dbReference type="PROSITE" id="PS01066">
    <property type="entry name" value="UPP_SYNTHASE"/>
    <property type="match status" value="1"/>
</dbReference>
<name>ISPT2_TROWT</name>
<sequence length="258" mass="29284">MGGKMLRSVSELIYKVYARYLLGQINLNNLPGHVALIVDGNRRWARKEKRDRISDGHRAGAGKAVDFLHWCDELDINIVTLYLLSNDNLKNRNRQELNDLVQVICDLIAQVSKRWKVNHVGSCENLPELLGNSLEGVKSSTKTNRYSERSMTVNLAIGYSGRAEITEAVRKIVNTYPIGDLPEKITEEVISANLYTGGLSDPDLIIRTSGEQRLSDFMPWQSTHSEFYFLEALGPDLRKVDFLRAIRDFSIRRRSFGA</sequence>
<accession>Q83GG2</accession>
<gene>
    <name evidence="1" type="primary">uppS2</name>
    <name type="ordered locus">TWT_331</name>
</gene>
<proteinExistence type="inferred from homology"/>